<name>YHBQ_ECO24</name>
<protein>
    <recommendedName>
        <fullName evidence="1">UPF0213 protein YhbQ</fullName>
    </recommendedName>
</protein>
<evidence type="ECO:0000255" key="1">
    <source>
        <dbReference type="HAMAP-Rule" id="MF_01029"/>
    </source>
</evidence>
<proteinExistence type="inferred from homology"/>
<feature type="chain" id="PRO_1000063661" description="UPF0213 protein YhbQ">
    <location>
        <begin position="1"/>
        <end position="100"/>
    </location>
</feature>
<feature type="domain" description="GIY-YIG" evidence="1">
    <location>
        <begin position="2"/>
        <end position="77"/>
    </location>
</feature>
<keyword id="KW-1185">Reference proteome</keyword>
<organism>
    <name type="scientific">Escherichia coli O139:H28 (strain E24377A / ETEC)</name>
    <dbReference type="NCBI Taxonomy" id="331111"/>
    <lineage>
        <taxon>Bacteria</taxon>
        <taxon>Pseudomonadati</taxon>
        <taxon>Pseudomonadota</taxon>
        <taxon>Gammaproteobacteria</taxon>
        <taxon>Enterobacterales</taxon>
        <taxon>Enterobacteriaceae</taxon>
        <taxon>Escherichia</taxon>
    </lineage>
</organism>
<reference key="1">
    <citation type="journal article" date="2008" name="J. Bacteriol.">
        <title>The pangenome structure of Escherichia coli: comparative genomic analysis of E. coli commensal and pathogenic isolates.</title>
        <authorList>
            <person name="Rasko D.A."/>
            <person name="Rosovitz M.J."/>
            <person name="Myers G.S.A."/>
            <person name="Mongodin E.F."/>
            <person name="Fricke W.F."/>
            <person name="Gajer P."/>
            <person name="Crabtree J."/>
            <person name="Sebaihia M."/>
            <person name="Thomson N.R."/>
            <person name="Chaudhuri R."/>
            <person name="Henderson I.R."/>
            <person name="Sperandio V."/>
            <person name="Ravel J."/>
        </authorList>
    </citation>
    <scope>NUCLEOTIDE SEQUENCE [LARGE SCALE GENOMIC DNA]</scope>
    <source>
        <strain>E24377A / ETEC</strain>
    </source>
</reference>
<sequence length="100" mass="11272">MTPWFLYLIRTADNKLYTGITTDVERRYQQHQSGKGAKALRGKGELTLAFSAPVGDRSLALRAEYRVKQLTKRQKERLVAESAGFAELLSSLQTPEIKSD</sequence>
<comment type="similarity">
    <text evidence="1">Belongs to the UPF0213 family.</text>
</comment>
<accession>A7ZS50</accession>
<dbReference type="EMBL" id="CP000800">
    <property type="protein sequence ID" value="ABV20974.1"/>
    <property type="molecule type" value="Genomic_DNA"/>
</dbReference>
<dbReference type="RefSeq" id="WP_000189326.1">
    <property type="nucleotide sequence ID" value="NC_009801.1"/>
</dbReference>
<dbReference type="SMR" id="A7ZS50"/>
<dbReference type="GeneID" id="75206010"/>
<dbReference type="KEGG" id="ecw:EcE24377A_3638"/>
<dbReference type="HOGENOM" id="CLU_135650_0_1_6"/>
<dbReference type="Proteomes" id="UP000001122">
    <property type="component" value="Chromosome"/>
</dbReference>
<dbReference type="CDD" id="cd10456">
    <property type="entry name" value="GIY-YIG_UPF0213"/>
    <property type="match status" value="1"/>
</dbReference>
<dbReference type="FunFam" id="3.40.1440.10:FF:000002">
    <property type="entry name" value="UPF0213 protein YhbQ"/>
    <property type="match status" value="1"/>
</dbReference>
<dbReference type="Gene3D" id="3.40.1440.10">
    <property type="entry name" value="GIY-YIG endonuclease"/>
    <property type="match status" value="1"/>
</dbReference>
<dbReference type="HAMAP" id="MF_01029">
    <property type="entry name" value="UPF0213"/>
    <property type="match status" value="1"/>
</dbReference>
<dbReference type="InterPro" id="IPR000305">
    <property type="entry name" value="GIY-YIG_endonuc"/>
</dbReference>
<dbReference type="InterPro" id="IPR035901">
    <property type="entry name" value="GIY-YIG_endonuc_sf"/>
</dbReference>
<dbReference type="InterPro" id="IPR050190">
    <property type="entry name" value="UPF0213_domain"/>
</dbReference>
<dbReference type="InterPro" id="IPR022992">
    <property type="entry name" value="UPF0213_GIY-YIG_endonuc"/>
</dbReference>
<dbReference type="PANTHER" id="PTHR34477">
    <property type="entry name" value="UPF0213 PROTEIN YHBQ"/>
    <property type="match status" value="1"/>
</dbReference>
<dbReference type="PANTHER" id="PTHR34477:SF1">
    <property type="entry name" value="UPF0213 PROTEIN YHBQ"/>
    <property type="match status" value="1"/>
</dbReference>
<dbReference type="Pfam" id="PF01541">
    <property type="entry name" value="GIY-YIG"/>
    <property type="match status" value="1"/>
</dbReference>
<dbReference type="SMART" id="SM00465">
    <property type="entry name" value="GIYc"/>
    <property type="match status" value="1"/>
</dbReference>
<dbReference type="SUPFAM" id="SSF82771">
    <property type="entry name" value="GIY-YIG endonuclease"/>
    <property type="match status" value="1"/>
</dbReference>
<dbReference type="PROSITE" id="PS50164">
    <property type="entry name" value="GIY_YIG"/>
    <property type="match status" value="1"/>
</dbReference>
<gene>
    <name evidence="1" type="primary">yhbQ</name>
    <name type="ordered locus">EcE24377A_3638</name>
</gene>